<reference key="1">
    <citation type="journal article" date="2008" name="BMC Genomics">
        <title>The genome of Aeromonas salmonicida subsp. salmonicida A449: insights into the evolution of a fish pathogen.</title>
        <authorList>
            <person name="Reith M.E."/>
            <person name="Singh R.K."/>
            <person name="Curtis B."/>
            <person name="Boyd J.M."/>
            <person name="Bouevitch A."/>
            <person name="Kimball J."/>
            <person name="Munholland J."/>
            <person name="Murphy C."/>
            <person name="Sarty D."/>
            <person name="Williams J."/>
            <person name="Nash J.H."/>
            <person name="Johnson S.C."/>
            <person name="Brown L.L."/>
        </authorList>
    </citation>
    <scope>NUCLEOTIDE SEQUENCE [LARGE SCALE GENOMIC DNA]</scope>
    <source>
        <strain>A449</strain>
    </source>
</reference>
<gene>
    <name type="ordered locus">ASA_0512</name>
</gene>
<proteinExistence type="inferred from homology"/>
<feature type="chain" id="PRO_1000045013" description="Probable Fe(2+)-trafficking protein">
    <location>
        <begin position="1"/>
        <end position="90"/>
    </location>
</feature>
<organism>
    <name type="scientific">Aeromonas salmonicida (strain A449)</name>
    <dbReference type="NCBI Taxonomy" id="382245"/>
    <lineage>
        <taxon>Bacteria</taxon>
        <taxon>Pseudomonadati</taxon>
        <taxon>Pseudomonadota</taxon>
        <taxon>Gammaproteobacteria</taxon>
        <taxon>Aeromonadales</taxon>
        <taxon>Aeromonadaceae</taxon>
        <taxon>Aeromonas</taxon>
    </lineage>
</organism>
<evidence type="ECO:0000255" key="1">
    <source>
        <dbReference type="HAMAP-Rule" id="MF_00686"/>
    </source>
</evidence>
<keyword id="KW-0408">Iron</keyword>
<name>FETP_AERS4</name>
<dbReference type="EMBL" id="CP000644">
    <property type="protein sequence ID" value="ABO88679.1"/>
    <property type="molecule type" value="Genomic_DNA"/>
</dbReference>
<dbReference type="RefSeq" id="WP_005313967.1">
    <property type="nucleotide sequence ID" value="NC_009348.1"/>
</dbReference>
<dbReference type="SMR" id="A4SIF7"/>
<dbReference type="STRING" id="29491.GCA_000820065_02970"/>
<dbReference type="KEGG" id="asa:ASA_0512"/>
<dbReference type="eggNOG" id="COG2924">
    <property type="taxonomic scope" value="Bacteria"/>
</dbReference>
<dbReference type="HOGENOM" id="CLU_170994_0_0_6"/>
<dbReference type="Proteomes" id="UP000000225">
    <property type="component" value="Chromosome"/>
</dbReference>
<dbReference type="GO" id="GO:0005829">
    <property type="term" value="C:cytosol"/>
    <property type="evidence" value="ECO:0007669"/>
    <property type="project" value="TreeGrafter"/>
</dbReference>
<dbReference type="GO" id="GO:0005506">
    <property type="term" value="F:iron ion binding"/>
    <property type="evidence" value="ECO:0007669"/>
    <property type="project" value="UniProtKB-UniRule"/>
</dbReference>
<dbReference type="GO" id="GO:0034599">
    <property type="term" value="P:cellular response to oxidative stress"/>
    <property type="evidence" value="ECO:0007669"/>
    <property type="project" value="TreeGrafter"/>
</dbReference>
<dbReference type="FunFam" id="1.10.3880.10:FF:000001">
    <property type="entry name" value="Probable Fe(2+)-trafficking protein"/>
    <property type="match status" value="1"/>
</dbReference>
<dbReference type="Gene3D" id="1.10.3880.10">
    <property type="entry name" value="Fe(II) trafficking protein YggX"/>
    <property type="match status" value="1"/>
</dbReference>
<dbReference type="HAMAP" id="MF_00686">
    <property type="entry name" value="Fe_traffic_YggX"/>
    <property type="match status" value="1"/>
</dbReference>
<dbReference type="InterPro" id="IPR007457">
    <property type="entry name" value="Fe_traffick_prot_YggX"/>
</dbReference>
<dbReference type="InterPro" id="IPR036766">
    <property type="entry name" value="Fe_traffick_prot_YggX_sf"/>
</dbReference>
<dbReference type="NCBIfam" id="NF003817">
    <property type="entry name" value="PRK05408.1"/>
    <property type="match status" value="1"/>
</dbReference>
<dbReference type="PANTHER" id="PTHR36965">
    <property type="entry name" value="FE(2+)-TRAFFICKING PROTEIN-RELATED"/>
    <property type="match status" value="1"/>
</dbReference>
<dbReference type="PANTHER" id="PTHR36965:SF1">
    <property type="entry name" value="FE(2+)-TRAFFICKING PROTEIN-RELATED"/>
    <property type="match status" value="1"/>
</dbReference>
<dbReference type="Pfam" id="PF04362">
    <property type="entry name" value="Iron_traffic"/>
    <property type="match status" value="1"/>
</dbReference>
<dbReference type="PIRSF" id="PIRSF029827">
    <property type="entry name" value="Fe_traffic_YggX"/>
    <property type="match status" value="1"/>
</dbReference>
<dbReference type="SUPFAM" id="SSF111148">
    <property type="entry name" value="YggX-like"/>
    <property type="match status" value="1"/>
</dbReference>
<accession>A4SIF7</accession>
<comment type="function">
    <text evidence="1">Could be a mediator in iron transactions between iron acquisition and iron-requiring processes, such as synthesis and/or repair of Fe-S clusters in biosynthetic enzymes.</text>
</comment>
<comment type="similarity">
    <text evidence="1">Belongs to the Fe(2+)-trafficking protein family.</text>
</comment>
<sequence length="90" mass="10581">MSRTVFCQRLKKEGPGLDFQLYPGELGKRIFDNISKEAWTEWQKKQVMLINEKKLNMMNLEHRQLLEKEMVSYLFEAGEVAIDGYTPPSQ</sequence>
<protein>
    <recommendedName>
        <fullName evidence="1">Probable Fe(2+)-trafficking protein</fullName>
    </recommendedName>
</protein>